<dbReference type="EMBL" id="CP000730">
    <property type="protein sequence ID" value="ABX29588.1"/>
    <property type="molecule type" value="Genomic_DNA"/>
</dbReference>
<dbReference type="RefSeq" id="WP_000034716.1">
    <property type="nucleotide sequence ID" value="NC_010079.1"/>
</dbReference>
<dbReference type="SMR" id="A8Z4B9"/>
<dbReference type="KEGG" id="sax:USA300HOU_1581"/>
<dbReference type="HOGENOM" id="CLU_005965_2_4_9"/>
<dbReference type="GO" id="GO:0005524">
    <property type="term" value="F:ATP binding"/>
    <property type="evidence" value="ECO:0007669"/>
    <property type="project" value="UniProtKB-UniRule"/>
</dbReference>
<dbReference type="GO" id="GO:0140662">
    <property type="term" value="F:ATP-dependent protein folding chaperone"/>
    <property type="evidence" value="ECO:0007669"/>
    <property type="project" value="InterPro"/>
</dbReference>
<dbReference type="GO" id="GO:0051082">
    <property type="term" value="F:unfolded protein binding"/>
    <property type="evidence" value="ECO:0007669"/>
    <property type="project" value="InterPro"/>
</dbReference>
<dbReference type="CDD" id="cd10234">
    <property type="entry name" value="ASKHA_NBD_HSP70_DnaK-like"/>
    <property type="match status" value="1"/>
</dbReference>
<dbReference type="FunFam" id="2.60.34.10:FF:000014">
    <property type="entry name" value="Chaperone protein DnaK HSP70"/>
    <property type="match status" value="1"/>
</dbReference>
<dbReference type="FunFam" id="1.20.1270.10:FF:000001">
    <property type="entry name" value="Molecular chaperone DnaK"/>
    <property type="match status" value="1"/>
</dbReference>
<dbReference type="FunFam" id="3.30.420.40:FF:000071">
    <property type="entry name" value="Molecular chaperone DnaK"/>
    <property type="match status" value="1"/>
</dbReference>
<dbReference type="FunFam" id="3.90.640.10:FF:000003">
    <property type="entry name" value="Molecular chaperone DnaK"/>
    <property type="match status" value="1"/>
</dbReference>
<dbReference type="Gene3D" id="1.20.1270.10">
    <property type="match status" value="1"/>
</dbReference>
<dbReference type="Gene3D" id="3.30.420.40">
    <property type="match status" value="2"/>
</dbReference>
<dbReference type="Gene3D" id="3.90.640.10">
    <property type="entry name" value="Actin, Chain A, domain 4"/>
    <property type="match status" value="1"/>
</dbReference>
<dbReference type="Gene3D" id="2.60.34.10">
    <property type="entry name" value="Substrate Binding Domain Of DNAk, Chain A, domain 1"/>
    <property type="match status" value="1"/>
</dbReference>
<dbReference type="HAMAP" id="MF_00332">
    <property type="entry name" value="DnaK"/>
    <property type="match status" value="1"/>
</dbReference>
<dbReference type="InterPro" id="IPR043129">
    <property type="entry name" value="ATPase_NBD"/>
</dbReference>
<dbReference type="InterPro" id="IPR012725">
    <property type="entry name" value="Chaperone_DnaK"/>
</dbReference>
<dbReference type="InterPro" id="IPR018181">
    <property type="entry name" value="Heat_shock_70_CS"/>
</dbReference>
<dbReference type="InterPro" id="IPR029048">
    <property type="entry name" value="HSP70_C_sf"/>
</dbReference>
<dbReference type="InterPro" id="IPR029047">
    <property type="entry name" value="HSP70_peptide-bd_sf"/>
</dbReference>
<dbReference type="InterPro" id="IPR013126">
    <property type="entry name" value="Hsp_70_fam"/>
</dbReference>
<dbReference type="NCBIfam" id="NF001413">
    <property type="entry name" value="PRK00290.1"/>
    <property type="match status" value="1"/>
</dbReference>
<dbReference type="NCBIfam" id="TIGR02350">
    <property type="entry name" value="prok_dnaK"/>
    <property type="match status" value="1"/>
</dbReference>
<dbReference type="PANTHER" id="PTHR19375">
    <property type="entry name" value="HEAT SHOCK PROTEIN 70KDA"/>
    <property type="match status" value="1"/>
</dbReference>
<dbReference type="Pfam" id="PF00012">
    <property type="entry name" value="HSP70"/>
    <property type="match status" value="1"/>
</dbReference>
<dbReference type="PRINTS" id="PR00301">
    <property type="entry name" value="HEATSHOCK70"/>
</dbReference>
<dbReference type="SUPFAM" id="SSF53067">
    <property type="entry name" value="Actin-like ATPase domain"/>
    <property type="match status" value="2"/>
</dbReference>
<dbReference type="SUPFAM" id="SSF100934">
    <property type="entry name" value="Heat shock protein 70kD (HSP70), C-terminal subdomain"/>
    <property type="match status" value="1"/>
</dbReference>
<dbReference type="SUPFAM" id="SSF100920">
    <property type="entry name" value="Heat shock protein 70kD (HSP70), peptide-binding domain"/>
    <property type="match status" value="1"/>
</dbReference>
<dbReference type="PROSITE" id="PS00297">
    <property type="entry name" value="HSP70_1"/>
    <property type="match status" value="1"/>
</dbReference>
<dbReference type="PROSITE" id="PS00329">
    <property type="entry name" value="HSP70_2"/>
    <property type="match status" value="1"/>
</dbReference>
<dbReference type="PROSITE" id="PS01036">
    <property type="entry name" value="HSP70_3"/>
    <property type="match status" value="1"/>
</dbReference>
<reference key="1">
    <citation type="journal article" date="2007" name="BMC Microbiol.">
        <title>Subtle genetic changes enhance virulence of methicillin resistant and sensitive Staphylococcus aureus.</title>
        <authorList>
            <person name="Highlander S.K."/>
            <person name="Hulten K.G."/>
            <person name="Qin X."/>
            <person name="Jiang H."/>
            <person name="Yerrapragada S."/>
            <person name="Mason E.O. Jr."/>
            <person name="Shang Y."/>
            <person name="Williams T.M."/>
            <person name="Fortunov R.M."/>
            <person name="Liu Y."/>
            <person name="Igboeli O."/>
            <person name="Petrosino J."/>
            <person name="Tirumalai M."/>
            <person name="Uzman A."/>
            <person name="Fox G.E."/>
            <person name="Cardenas A.M."/>
            <person name="Muzny D.M."/>
            <person name="Hemphill L."/>
            <person name="Ding Y."/>
            <person name="Dugan S."/>
            <person name="Blyth P.R."/>
            <person name="Buhay C.J."/>
            <person name="Dinh H.H."/>
            <person name="Hawes A.C."/>
            <person name="Holder M."/>
            <person name="Kovar C.L."/>
            <person name="Lee S.L."/>
            <person name="Liu W."/>
            <person name="Nazareth L.V."/>
            <person name="Wang Q."/>
            <person name="Zhou J."/>
            <person name="Kaplan S.L."/>
            <person name="Weinstock G.M."/>
        </authorList>
    </citation>
    <scope>NUCLEOTIDE SEQUENCE [LARGE SCALE GENOMIC DNA]</scope>
    <source>
        <strain>USA300 / TCH1516</strain>
    </source>
</reference>
<accession>A8Z4B9</accession>
<sequence>MSKIIGIDLGTTNSCVTVLEGDEPKVIQNPEGSRTTPSVVAFKNGETQVGEVAKRQAITNPNTVQSIKRHMGTDYKVDIEGKSYTPQEISAMILQNLKNTAESYLGEKVDKAVITVPAYFNDAERQATKDAGKIAGLEVERIINEPTAAALAYGLDKTDKDEKVLVFDLGGGTFDVSILELGDGVFEVLSTAGDNKLGGDDFDQVIIDYLVAEFKKENGVDLSQDKMALQRLKDAAEKAKKDLSGVSQTQISLPFISAGENGPLHLEVNLTRSKFEELSDSLIRRTMEPTRQAMKDAGLTNSDIDEVILVGGSTRIPAVQEAVKKEIGKEPNKGVNPDEVVAMGAAIQGGVITGDVKDVVLLDVTPLSLGIEILGGRMNTLIERNTTIPTSKSQIYSTAVDNQPSVDVHVLQGERPMAADNKTLGRFQLTDIPPAERGKPQIEVTFDIDKNGIVNVTAKDLGTNKEQRITIQSSSSLSDEEIDRMVKDAEVNAEADKKRREEVDLRNEADSLVFQVEKTLTDLGENIGEEDKKSAEEKKDALKTALEGQDIEDIKSKKEELEKVIQELSAKVYEQAAQQQQQAQGANAGQNNDSTVEDAEFKEVKDDDKK</sequence>
<feature type="chain" id="PRO_1000079250" description="Chaperone protein DnaK">
    <location>
        <begin position="1"/>
        <end position="610"/>
    </location>
</feature>
<feature type="region of interest" description="Disordered" evidence="2">
    <location>
        <begin position="525"/>
        <end position="544"/>
    </location>
</feature>
<feature type="region of interest" description="Disordered" evidence="2">
    <location>
        <begin position="576"/>
        <end position="610"/>
    </location>
</feature>
<feature type="compositionally biased region" description="Basic and acidic residues" evidence="2">
    <location>
        <begin position="529"/>
        <end position="542"/>
    </location>
</feature>
<feature type="compositionally biased region" description="Low complexity" evidence="2">
    <location>
        <begin position="576"/>
        <end position="592"/>
    </location>
</feature>
<feature type="compositionally biased region" description="Basic and acidic residues" evidence="2">
    <location>
        <begin position="599"/>
        <end position="610"/>
    </location>
</feature>
<feature type="modified residue" description="Phosphothreonine; by autocatalysis" evidence="1">
    <location>
        <position position="173"/>
    </location>
</feature>
<gene>
    <name evidence="1" type="primary">dnaK</name>
    <name type="ordered locus">USA300HOU_1581</name>
</gene>
<evidence type="ECO:0000255" key="1">
    <source>
        <dbReference type="HAMAP-Rule" id="MF_00332"/>
    </source>
</evidence>
<evidence type="ECO:0000256" key="2">
    <source>
        <dbReference type="SAM" id="MobiDB-lite"/>
    </source>
</evidence>
<name>DNAK_STAAT</name>
<organism>
    <name type="scientific">Staphylococcus aureus (strain USA300 / TCH1516)</name>
    <dbReference type="NCBI Taxonomy" id="451516"/>
    <lineage>
        <taxon>Bacteria</taxon>
        <taxon>Bacillati</taxon>
        <taxon>Bacillota</taxon>
        <taxon>Bacilli</taxon>
        <taxon>Bacillales</taxon>
        <taxon>Staphylococcaceae</taxon>
        <taxon>Staphylococcus</taxon>
    </lineage>
</organism>
<protein>
    <recommendedName>
        <fullName evidence="1">Chaperone protein DnaK</fullName>
    </recommendedName>
    <alternativeName>
        <fullName evidence="1">HSP70</fullName>
    </alternativeName>
    <alternativeName>
        <fullName evidence="1">Heat shock 70 kDa protein</fullName>
    </alternativeName>
    <alternativeName>
        <fullName evidence="1">Heat shock protein 70</fullName>
    </alternativeName>
</protein>
<keyword id="KW-0067">ATP-binding</keyword>
<keyword id="KW-0143">Chaperone</keyword>
<keyword id="KW-0547">Nucleotide-binding</keyword>
<keyword id="KW-0597">Phosphoprotein</keyword>
<keyword id="KW-0346">Stress response</keyword>
<comment type="function">
    <text evidence="1">Acts as a chaperone.</text>
</comment>
<comment type="induction">
    <text evidence="1">By stress conditions e.g. heat shock.</text>
</comment>
<comment type="similarity">
    <text evidence="1">Belongs to the heat shock protein 70 family.</text>
</comment>
<proteinExistence type="inferred from homology"/>